<dbReference type="EMBL" id="CP000721">
    <property type="protein sequence ID" value="ABR33380.1"/>
    <property type="molecule type" value="Genomic_DNA"/>
</dbReference>
<dbReference type="RefSeq" id="WP_011968535.1">
    <property type="nucleotide sequence ID" value="NC_009617.1"/>
</dbReference>
<dbReference type="SMR" id="A6LSQ0"/>
<dbReference type="GeneID" id="66344188"/>
<dbReference type="KEGG" id="cbe:Cbei_1198"/>
<dbReference type="eggNOG" id="COG0779">
    <property type="taxonomic scope" value="Bacteria"/>
</dbReference>
<dbReference type="HOGENOM" id="CLU_070525_2_0_9"/>
<dbReference type="Proteomes" id="UP000000565">
    <property type="component" value="Chromosome"/>
</dbReference>
<dbReference type="GO" id="GO:0005829">
    <property type="term" value="C:cytosol"/>
    <property type="evidence" value="ECO:0007669"/>
    <property type="project" value="TreeGrafter"/>
</dbReference>
<dbReference type="GO" id="GO:0000028">
    <property type="term" value="P:ribosomal small subunit assembly"/>
    <property type="evidence" value="ECO:0007669"/>
    <property type="project" value="TreeGrafter"/>
</dbReference>
<dbReference type="GO" id="GO:0006412">
    <property type="term" value="P:translation"/>
    <property type="evidence" value="ECO:0007669"/>
    <property type="project" value="TreeGrafter"/>
</dbReference>
<dbReference type="CDD" id="cd01734">
    <property type="entry name" value="YlxS_C"/>
    <property type="match status" value="1"/>
</dbReference>
<dbReference type="FunFam" id="3.30.300.70:FF:000001">
    <property type="entry name" value="Ribosome maturation factor RimP"/>
    <property type="match status" value="1"/>
</dbReference>
<dbReference type="Gene3D" id="2.30.30.180">
    <property type="entry name" value="Ribosome maturation factor RimP, C-terminal domain"/>
    <property type="match status" value="1"/>
</dbReference>
<dbReference type="Gene3D" id="3.30.300.70">
    <property type="entry name" value="RimP-like superfamily, N-terminal"/>
    <property type="match status" value="1"/>
</dbReference>
<dbReference type="HAMAP" id="MF_01077">
    <property type="entry name" value="RimP"/>
    <property type="match status" value="1"/>
</dbReference>
<dbReference type="InterPro" id="IPR003728">
    <property type="entry name" value="Ribosome_maturation_RimP"/>
</dbReference>
<dbReference type="InterPro" id="IPR028998">
    <property type="entry name" value="RimP_C"/>
</dbReference>
<dbReference type="InterPro" id="IPR036847">
    <property type="entry name" value="RimP_C_sf"/>
</dbReference>
<dbReference type="InterPro" id="IPR028989">
    <property type="entry name" value="RimP_N"/>
</dbReference>
<dbReference type="InterPro" id="IPR035956">
    <property type="entry name" value="RimP_N_sf"/>
</dbReference>
<dbReference type="NCBIfam" id="NF000934">
    <property type="entry name" value="PRK00092.3-1"/>
    <property type="match status" value="1"/>
</dbReference>
<dbReference type="PANTHER" id="PTHR33867">
    <property type="entry name" value="RIBOSOME MATURATION FACTOR RIMP"/>
    <property type="match status" value="1"/>
</dbReference>
<dbReference type="PANTHER" id="PTHR33867:SF1">
    <property type="entry name" value="RIBOSOME MATURATION FACTOR RIMP"/>
    <property type="match status" value="1"/>
</dbReference>
<dbReference type="Pfam" id="PF17384">
    <property type="entry name" value="DUF150_C"/>
    <property type="match status" value="1"/>
</dbReference>
<dbReference type="Pfam" id="PF02576">
    <property type="entry name" value="RimP_N"/>
    <property type="match status" value="1"/>
</dbReference>
<dbReference type="SUPFAM" id="SSF74942">
    <property type="entry name" value="YhbC-like, C-terminal domain"/>
    <property type="match status" value="1"/>
</dbReference>
<dbReference type="SUPFAM" id="SSF75420">
    <property type="entry name" value="YhbC-like, N-terminal domain"/>
    <property type="match status" value="1"/>
</dbReference>
<feature type="chain" id="PRO_1000084520" description="Ribosome maturation factor RimP">
    <location>
        <begin position="1"/>
        <end position="152"/>
    </location>
</feature>
<protein>
    <recommendedName>
        <fullName evidence="1">Ribosome maturation factor RimP</fullName>
    </recommendedName>
</protein>
<sequence>MKKDVLIERIEELVRPIVSELSCELYYVEYVKENGEFYLRIYIDKEGRVSLNDCEAVSRRVSEILDVEDPIKEAYYLEVSSPGLNRGLYKEEHFKKYIGSEVLIRLTSSLNGVKSVKGLLRDVSEDSILVEGETEIQIPRDKIKAANLEGEI</sequence>
<accession>A6LSQ0</accession>
<evidence type="ECO:0000255" key="1">
    <source>
        <dbReference type="HAMAP-Rule" id="MF_01077"/>
    </source>
</evidence>
<proteinExistence type="inferred from homology"/>
<keyword id="KW-0963">Cytoplasm</keyword>
<keyword id="KW-0690">Ribosome biogenesis</keyword>
<gene>
    <name evidence="1" type="primary">rimP</name>
    <name type="ordered locus">Cbei_1198</name>
</gene>
<name>RIMP_CLOB8</name>
<reference key="1">
    <citation type="submission" date="2007-06" db="EMBL/GenBank/DDBJ databases">
        <title>Complete sequence of Clostridium beijerinckii NCIMB 8052.</title>
        <authorList>
            <consortium name="US DOE Joint Genome Institute"/>
            <person name="Copeland A."/>
            <person name="Lucas S."/>
            <person name="Lapidus A."/>
            <person name="Barry K."/>
            <person name="Detter J.C."/>
            <person name="Glavina del Rio T."/>
            <person name="Hammon N."/>
            <person name="Israni S."/>
            <person name="Dalin E."/>
            <person name="Tice H."/>
            <person name="Pitluck S."/>
            <person name="Sims D."/>
            <person name="Brettin T."/>
            <person name="Bruce D."/>
            <person name="Tapia R."/>
            <person name="Brainard J."/>
            <person name="Schmutz J."/>
            <person name="Larimer F."/>
            <person name="Land M."/>
            <person name="Hauser L."/>
            <person name="Kyrpides N."/>
            <person name="Mikhailova N."/>
            <person name="Bennet G."/>
            <person name="Cann I."/>
            <person name="Chen J.-S."/>
            <person name="Contreras A.L."/>
            <person name="Jones D."/>
            <person name="Kashket E."/>
            <person name="Mitchell W."/>
            <person name="Stoddard S."/>
            <person name="Schwarz W."/>
            <person name="Qureshi N."/>
            <person name="Young M."/>
            <person name="Shi Z."/>
            <person name="Ezeji T."/>
            <person name="White B."/>
            <person name="Blaschek H."/>
            <person name="Richardson P."/>
        </authorList>
    </citation>
    <scope>NUCLEOTIDE SEQUENCE [LARGE SCALE GENOMIC DNA]</scope>
    <source>
        <strain>ATCC 51743 / NCIMB 8052</strain>
    </source>
</reference>
<organism>
    <name type="scientific">Clostridium beijerinckii (strain ATCC 51743 / NCIMB 8052)</name>
    <name type="common">Clostridium acetobutylicum</name>
    <dbReference type="NCBI Taxonomy" id="290402"/>
    <lineage>
        <taxon>Bacteria</taxon>
        <taxon>Bacillati</taxon>
        <taxon>Bacillota</taxon>
        <taxon>Clostridia</taxon>
        <taxon>Eubacteriales</taxon>
        <taxon>Clostridiaceae</taxon>
        <taxon>Clostridium</taxon>
    </lineage>
</organism>
<comment type="function">
    <text evidence="1">Required for maturation of 30S ribosomal subunits.</text>
</comment>
<comment type="subcellular location">
    <subcellularLocation>
        <location evidence="1">Cytoplasm</location>
    </subcellularLocation>
</comment>
<comment type="similarity">
    <text evidence="1">Belongs to the RimP family.</text>
</comment>